<evidence type="ECO:0000255" key="1">
    <source>
        <dbReference type="HAMAP-Rule" id="MF_00340"/>
    </source>
</evidence>
<evidence type="ECO:0000256" key="2">
    <source>
        <dbReference type="SAM" id="MobiDB-lite"/>
    </source>
</evidence>
<evidence type="ECO:0000305" key="3"/>
<sequence length="61" mass="6760">MAVPKKKTSKSRKNMRRAHDFLTTQSVSVCPQCKSPKLPHRVCPTCGTYKGKEVLDVAKAS</sequence>
<keyword id="KW-1185">Reference proteome</keyword>
<keyword id="KW-0687">Ribonucleoprotein</keyword>
<keyword id="KW-0689">Ribosomal protein</keyword>
<reference key="1">
    <citation type="submission" date="2006-10" db="EMBL/GenBank/DDBJ databases">
        <title>Complete sequence of chromosome of Pelobacter propionicus DSM 2379.</title>
        <authorList>
            <consortium name="US DOE Joint Genome Institute"/>
            <person name="Copeland A."/>
            <person name="Lucas S."/>
            <person name="Lapidus A."/>
            <person name="Barry K."/>
            <person name="Detter J.C."/>
            <person name="Glavina del Rio T."/>
            <person name="Hammon N."/>
            <person name="Israni S."/>
            <person name="Dalin E."/>
            <person name="Tice H."/>
            <person name="Pitluck S."/>
            <person name="Saunders E."/>
            <person name="Brettin T."/>
            <person name="Bruce D."/>
            <person name="Han C."/>
            <person name="Tapia R."/>
            <person name="Schmutz J."/>
            <person name="Larimer F."/>
            <person name="Land M."/>
            <person name="Hauser L."/>
            <person name="Kyrpides N."/>
            <person name="Kim E."/>
            <person name="Lovley D."/>
            <person name="Richardson P."/>
        </authorList>
    </citation>
    <scope>NUCLEOTIDE SEQUENCE [LARGE SCALE GENOMIC DNA]</scope>
    <source>
        <strain>DSM 2379 / NBRC 103807 / OttBd1</strain>
    </source>
</reference>
<name>RL32_PELPD</name>
<protein>
    <recommendedName>
        <fullName evidence="1">Large ribosomal subunit protein bL32</fullName>
    </recommendedName>
    <alternativeName>
        <fullName evidence="3">50S ribosomal protein L32</fullName>
    </alternativeName>
</protein>
<comment type="similarity">
    <text evidence="1">Belongs to the bacterial ribosomal protein bL32 family.</text>
</comment>
<accession>A1APT2</accession>
<proteinExistence type="inferred from homology"/>
<gene>
    <name evidence="1" type="primary">rpmF</name>
    <name type="ordered locus">Ppro_1740</name>
</gene>
<dbReference type="EMBL" id="CP000482">
    <property type="protein sequence ID" value="ABK99352.1"/>
    <property type="molecule type" value="Genomic_DNA"/>
</dbReference>
<dbReference type="RefSeq" id="WP_011735629.1">
    <property type="nucleotide sequence ID" value="NC_008609.1"/>
</dbReference>
<dbReference type="SMR" id="A1APT2"/>
<dbReference type="STRING" id="338966.Ppro_1740"/>
<dbReference type="KEGG" id="ppd:Ppro_1740"/>
<dbReference type="eggNOG" id="COG0333">
    <property type="taxonomic scope" value="Bacteria"/>
</dbReference>
<dbReference type="HOGENOM" id="CLU_129084_1_3_7"/>
<dbReference type="OrthoDB" id="9801927at2"/>
<dbReference type="Proteomes" id="UP000006732">
    <property type="component" value="Chromosome"/>
</dbReference>
<dbReference type="GO" id="GO:0015934">
    <property type="term" value="C:large ribosomal subunit"/>
    <property type="evidence" value="ECO:0007669"/>
    <property type="project" value="InterPro"/>
</dbReference>
<dbReference type="GO" id="GO:0003735">
    <property type="term" value="F:structural constituent of ribosome"/>
    <property type="evidence" value="ECO:0007669"/>
    <property type="project" value="InterPro"/>
</dbReference>
<dbReference type="GO" id="GO:0006412">
    <property type="term" value="P:translation"/>
    <property type="evidence" value="ECO:0007669"/>
    <property type="project" value="UniProtKB-UniRule"/>
</dbReference>
<dbReference type="FunFam" id="1.20.5.640:FF:000001">
    <property type="entry name" value="50S ribosomal protein L32"/>
    <property type="match status" value="1"/>
</dbReference>
<dbReference type="Gene3D" id="1.20.5.640">
    <property type="entry name" value="Single helix bin"/>
    <property type="match status" value="1"/>
</dbReference>
<dbReference type="HAMAP" id="MF_00340">
    <property type="entry name" value="Ribosomal_bL32"/>
    <property type="match status" value="1"/>
</dbReference>
<dbReference type="InterPro" id="IPR002677">
    <property type="entry name" value="Ribosomal_bL32"/>
</dbReference>
<dbReference type="InterPro" id="IPR044957">
    <property type="entry name" value="Ribosomal_bL32_bact"/>
</dbReference>
<dbReference type="InterPro" id="IPR011332">
    <property type="entry name" value="Ribosomal_zn-bd"/>
</dbReference>
<dbReference type="NCBIfam" id="TIGR01031">
    <property type="entry name" value="rpmF_bact"/>
    <property type="match status" value="1"/>
</dbReference>
<dbReference type="PANTHER" id="PTHR35534">
    <property type="entry name" value="50S RIBOSOMAL PROTEIN L32"/>
    <property type="match status" value="1"/>
</dbReference>
<dbReference type="PANTHER" id="PTHR35534:SF1">
    <property type="entry name" value="LARGE RIBOSOMAL SUBUNIT PROTEIN BL32"/>
    <property type="match status" value="1"/>
</dbReference>
<dbReference type="Pfam" id="PF01783">
    <property type="entry name" value="Ribosomal_L32p"/>
    <property type="match status" value="1"/>
</dbReference>
<dbReference type="SUPFAM" id="SSF57829">
    <property type="entry name" value="Zn-binding ribosomal proteins"/>
    <property type="match status" value="1"/>
</dbReference>
<feature type="chain" id="PRO_0000296522" description="Large ribosomal subunit protein bL32">
    <location>
        <begin position="1"/>
        <end position="61"/>
    </location>
</feature>
<feature type="region of interest" description="Disordered" evidence="2">
    <location>
        <begin position="1"/>
        <end position="20"/>
    </location>
</feature>
<feature type="compositionally biased region" description="Basic residues" evidence="2">
    <location>
        <begin position="1"/>
        <end position="16"/>
    </location>
</feature>
<organism>
    <name type="scientific">Pelobacter propionicus (strain DSM 2379 / NBRC 103807 / OttBd1)</name>
    <dbReference type="NCBI Taxonomy" id="338966"/>
    <lineage>
        <taxon>Bacteria</taxon>
        <taxon>Pseudomonadati</taxon>
        <taxon>Thermodesulfobacteriota</taxon>
        <taxon>Desulfuromonadia</taxon>
        <taxon>Desulfuromonadales</taxon>
        <taxon>Desulfuromonadaceae</taxon>
        <taxon>Pelobacter</taxon>
    </lineage>
</organism>